<feature type="initiator methionine" description="Removed" evidence="2 5 6">
    <location>
        <position position="1"/>
    </location>
</feature>
<feature type="chain" id="PRO_0000174181" description="Transmembrane protein 50A">
    <location>
        <begin position="2"/>
        <end position="157"/>
    </location>
</feature>
<feature type="transmembrane region" description="Helical" evidence="1">
    <location>
        <begin position="26"/>
        <end position="46"/>
    </location>
</feature>
<feature type="transmembrane region" description="Helical" evidence="1">
    <location>
        <begin position="58"/>
        <end position="78"/>
    </location>
</feature>
<feature type="transmembrane region" description="Helical" evidence="1">
    <location>
        <begin position="95"/>
        <end position="115"/>
    </location>
</feature>
<feature type="transmembrane region" description="Helical" evidence="1">
    <location>
        <begin position="126"/>
        <end position="146"/>
    </location>
</feature>
<feature type="modified residue" description="N-acetylserine" evidence="2 5 6">
    <location>
        <position position="2"/>
    </location>
</feature>
<feature type="modified residue" description="Phosphoserine" evidence="7">
    <location>
        <position position="2"/>
    </location>
</feature>
<feature type="sequence variant" id="VAR_013121" description="In dbSNP:rs3093647." evidence="3">
    <original>A</original>
    <variation>V</variation>
    <location>
        <position position="58"/>
    </location>
</feature>
<feature type="sequence variant" id="VAR_007851">
    <original>F</original>
    <variation>L</variation>
    <location>
        <position position="141"/>
    </location>
</feature>
<sequence length="157" mass="17400">MSGFLEGLRCSECIDWGEKRNTIASIAAGVLFFTGWWIIIDAAVIYPTMKDFNHSYHACGVIATIAFLMINAVSNGQVRGDSYSEGCLGQTGARIWLFVGFMLAFGSLIASMWILFGGYVAKEKDIVYPGIAVFFQNAFIFFGGLVFKFGRTEDLWQ</sequence>
<dbReference type="EMBL" id="AF081282">
    <property type="protein sequence ID" value="AAD17754.1"/>
    <property type="molecule type" value="mRNA"/>
</dbReference>
<dbReference type="EMBL" id="AL136627">
    <property type="protein sequence ID" value="CAB66562.1"/>
    <property type="molecule type" value="mRNA"/>
</dbReference>
<dbReference type="EMBL" id="AY358650">
    <property type="protein sequence ID" value="AAQ89013.1"/>
    <property type="molecule type" value="mRNA"/>
</dbReference>
<dbReference type="EMBL" id="AF458851">
    <property type="protein sequence ID" value="AAL51108.1"/>
    <property type="molecule type" value="Genomic_DNA"/>
</dbReference>
<dbReference type="EMBL" id="BC007341">
    <property type="protein sequence ID" value="AAH07341.1"/>
    <property type="molecule type" value="mRNA"/>
</dbReference>
<dbReference type="CCDS" id="CCDS264.1"/>
<dbReference type="RefSeq" id="NP_055128.1">
    <property type="nucleotide sequence ID" value="NM_014313.4"/>
</dbReference>
<dbReference type="RefSeq" id="XP_011539461.1">
    <property type="nucleotide sequence ID" value="XM_011541159.3"/>
</dbReference>
<dbReference type="RefSeq" id="XP_054191698.1">
    <property type="nucleotide sequence ID" value="XM_054335723.1"/>
</dbReference>
<dbReference type="BioGRID" id="117120">
    <property type="interactions" value="17"/>
</dbReference>
<dbReference type="CORUM" id="O95807"/>
<dbReference type="FunCoup" id="O95807">
    <property type="interactions" value="644"/>
</dbReference>
<dbReference type="IntAct" id="O95807">
    <property type="interactions" value="11"/>
</dbReference>
<dbReference type="STRING" id="9606.ENSP00000363478"/>
<dbReference type="TCDB" id="9.B.199.1.1">
    <property type="family name" value="the 4 tms pf05225 (pf0225) family"/>
</dbReference>
<dbReference type="GlyGen" id="O95807">
    <property type="glycosylation" value="1 site, 1 O-linked glycan (1 site)"/>
</dbReference>
<dbReference type="iPTMnet" id="O95807"/>
<dbReference type="PhosphoSitePlus" id="O95807"/>
<dbReference type="SwissPalm" id="O95807"/>
<dbReference type="BioMuta" id="TMEM50A"/>
<dbReference type="jPOST" id="O95807"/>
<dbReference type="MassIVE" id="O95807"/>
<dbReference type="PaxDb" id="9606-ENSP00000363478"/>
<dbReference type="PeptideAtlas" id="O95807"/>
<dbReference type="ProteomicsDB" id="51061"/>
<dbReference type="Pumba" id="O95807"/>
<dbReference type="Antibodypedia" id="77930">
    <property type="antibodies" value="5 antibodies from 5 providers"/>
</dbReference>
<dbReference type="DNASU" id="23585"/>
<dbReference type="Ensembl" id="ENST00000374358.5">
    <property type="protein sequence ID" value="ENSP00000363478.4"/>
    <property type="gene ID" value="ENSG00000183726.11"/>
</dbReference>
<dbReference type="GeneID" id="23585"/>
<dbReference type="KEGG" id="hsa:23585"/>
<dbReference type="MANE-Select" id="ENST00000374358.5">
    <property type="protein sequence ID" value="ENSP00000363478.4"/>
    <property type="RefSeq nucleotide sequence ID" value="NM_014313.4"/>
    <property type="RefSeq protein sequence ID" value="NP_055128.1"/>
</dbReference>
<dbReference type="AGR" id="HGNC:30590"/>
<dbReference type="CTD" id="23585"/>
<dbReference type="DisGeNET" id="23585"/>
<dbReference type="GeneCards" id="TMEM50A"/>
<dbReference type="HGNC" id="HGNC:30590">
    <property type="gene designation" value="TMEM50A"/>
</dbReference>
<dbReference type="HPA" id="ENSG00000183726">
    <property type="expression patterns" value="Low tissue specificity"/>
</dbReference>
<dbReference type="MIM" id="605348">
    <property type="type" value="gene"/>
</dbReference>
<dbReference type="neXtProt" id="NX_O95807"/>
<dbReference type="OpenTargets" id="ENSG00000183726"/>
<dbReference type="PharmGKB" id="PA142670766"/>
<dbReference type="VEuPathDB" id="HostDB:ENSG00000183726"/>
<dbReference type="eggNOG" id="KOG3393">
    <property type="taxonomic scope" value="Eukaryota"/>
</dbReference>
<dbReference type="GeneTree" id="ENSGT00940000157715"/>
<dbReference type="HOGENOM" id="CLU_096876_1_0_1"/>
<dbReference type="InParanoid" id="O95807"/>
<dbReference type="OMA" id="FNNAYHV"/>
<dbReference type="OrthoDB" id="268928at2759"/>
<dbReference type="PAN-GO" id="O95807">
    <property type="GO annotations" value="1 GO annotation based on evolutionary models"/>
</dbReference>
<dbReference type="PhylomeDB" id="O95807"/>
<dbReference type="TreeFam" id="TF300282"/>
<dbReference type="PathwayCommons" id="O95807"/>
<dbReference type="SignaLink" id="O95807"/>
<dbReference type="BioGRID-ORCS" id="23585">
    <property type="hits" value="19 hits in 1158 CRISPR screens"/>
</dbReference>
<dbReference type="ChiTaRS" id="TMEM50A">
    <property type="organism name" value="human"/>
</dbReference>
<dbReference type="GeneWiki" id="TMEM50A"/>
<dbReference type="GenomeRNAi" id="23585"/>
<dbReference type="Pharos" id="O95807">
    <property type="development level" value="Tdark"/>
</dbReference>
<dbReference type="PRO" id="PR:O95807"/>
<dbReference type="Proteomes" id="UP000005640">
    <property type="component" value="Chromosome 1"/>
</dbReference>
<dbReference type="RNAct" id="O95807">
    <property type="molecule type" value="protein"/>
</dbReference>
<dbReference type="Bgee" id="ENSG00000183726">
    <property type="expression patterns" value="Expressed in esophagus squamous epithelium and 199 other cell types or tissues"/>
</dbReference>
<dbReference type="ExpressionAtlas" id="O95807">
    <property type="expression patterns" value="baseline and differential"/>
</dbReference>
<dbReference type="GO" id="GO:0005783">
    <property type="term" value="C:endoplasmic reticulum"/>
    <property type="evidence" value="ECO:0000314"/>
    <property type="project" value="LIFEdb"/>
</dbReference>
<dbReference type="GO" id="GO:0097386">
    <property type="term" value="C:glial cell projection"/>
    <property type="evidence" value="ECO:0007669"/>
    <property type="project" value="Ensembl"/>
</dbReference>
<dbReference type="GO" id="GO:0016020">
    <property type="term" value="C:membrane"/>
    <property type="evidence" value="ECO:0007669"/>
    <property type="project" value="UniProtKB-SubCell"/>
</dbReference>
<dbReference type="GO" id="GO:0043025">
    <property type="term" value="C:neuronal cell body"/>
    <property type="evidence" value="ECO:0007669"/>
    <property type="project" value="Ensembl"/>
</dbReference>
<dbReference type="GO" id="GO:0032511">
    <property type="term" value="P:late endosome to vacuole transport via multivesicular body sorting pathway"/>
    <property type="evidence" value="ECO:0000318"/>
    <property type="project" value="GO_Central"/>
</dbReference>
<dbReference type="InterPro" id="IPR007919">
    <property type="entry name" value="UPF0220"/>
</dbReference>
<dbReference type="PANTHER" id="PTHR13180">
    <property type="entry name" value="SMALL MEMBRANE PROTEIN-RELATED"/>
    <property type="match status" value="1"/>
</dbReference>
<dbReference type="Pfam" id="PF05255">
    <property type="entry name" value="UPF0220"/>
    <property type="match status" value="1"/>
</dbReference>
<evidence type="ECO:0000255" key="1"/>
<evidence type="ECO:0000269" key="2">
    <source>
    </source>
</evidence>
<evidence type="ECO:0000269" key="3">
    <source ref="4"/>
</evidence>
<evidence type="ECO:0000305" key="4"/>
<evidence type="ECO:0007744" key="5">
    <source>
    </source>
</evidence>
<evidence type="ECO:0007744" key="6">
    <source>
    </source>
</evidence>
<evidence type="ECO:0007744" key="7">
    <source>
    </source>
</evidence>
<accession>O95807</accession>
<keyword id="KW-0007">Acetylation</keyword>
<keyword id="KW-0472">Membrane</keyword>
<keyword id="KW-0597">Phosphoprotein</keyword>
<keyword id="KW-1267">Proteomics identification</keyword>
<keyword id="KW-1185">Reference proteome</keyword>
<keyword id="KW-0812">Transmembrane</keyword>
<keyword id="KW-1133">Transmembrane helix</keyword>
<proteinExistence type="evidence at protein level"/>
<reference key="1">
    <citation type="submission" date="1998-07" db="EMBL/GenBank/DDBJ databases">
        <title>A new member of the 18 kDa small membrane protein family in human.</title>
        <authorList>
            <person name="Hu G."/>
        </authorList>
    </citation>
    <scope>NUCLEOTIDE SEQUENCE [MRNA]</scope>
</reference>
<reference key="2">
    <citation type="journal article" date="2001" name="Genome Res.">
        <title>Towards a catalog of human genes and proteins: sequencing and analysis of 500 novel complete protein coding human cDNAs.</title>
        <authorList>
            <person name="Wiemann S."/>
            <person name="Weil B."/>
            <person name="Wellenreuther R."/>
            <person name="Gassenhuber J."/>
            <person name="Glassl S."/>
            <person name="Ansorge W."/>
            <person name="Boecher M."/>
            <person name="Bloecker H."/>
            <person name="Bauersachs S."/>
            <person name="Blum H."/>
            <person name="Lauber J."/>
            <person name="Duesterhoeft A."/>
            <person name="Beyer A."/>
            <person name="Koehrer K."/>
            <person name="Strack N."/>
            <person name="Mewes H.-W."/>
            <person name="Ottenwaelder B."/>
            <person name="Obermaier B."/>
            <person name="Tampe J."/>
            <person name="Heubner D."/>
            <person name="Wambutt R."/>
            <person name="Korn B."/>
            <person name="Klein M."/>
            <person name="Poustka A."/>
        </authorList>
    </citation>
    <scope>NUCLEOTIDE SEQUENCE [LARGE SCALE MRNA]</scope>
    <source>
        <tissue>Brain</tissue>
    </source>
</reference>
<reference key="3">
    <citation type="journal article" date="2003" name="Genome Res.">
        <title>The secreted protein discovery initiative (SPDI), a large-scale effort to identify novel human secreted and transmembrane proteins: a bioinformatics assessment.</title>
        <authorList>
            <person name="Clark H.F."/>
            <person name="Gurney A.L."/>
            <person name="Abaya E."/>
            <person name="Baker K."/>
            <person name="Baldwin D.T."/>
            <person name="Brush J."/>
            <person name="Chen J."/>
            <person name="Chow B."/>
            <person name="Chui C."/>
            <person name="Crowley C."/>
            <person name="Currell B."/>
            <person name="Deuel B."/>
            <person name="Dowd P."/>
            <person name="Eaton D."/>
            <person name="Foster J.S."/>
            <person name="Grimaldi C."/>
            <person name="Gu Q."/>
            <person name="Hass P.E."/>
            <person name="Heldens S."/>
            <person name="Huang A."/>
            <person name="Kim H.S."/>
            <person name="Klimowski L."/>
            <person name="Jin Y."/>
            <person name="Johnson S."/>
            <person name="Lee J."/>
            <person name="Lewis L."/>
            <person name="Liao D."/>
            <person name="Mark M.R."/>
            <person name="Robbie E."/>
            <person name="Sanchez C."/>
            <person name="Schoenfeld J."/>
            <person name="Seshagiri S."/>
            <person name="Simmons L."/>
            <person name="Singh J."/>
            <person name="Smith V."/>
            <person name="Stinson J."/>
            <person name="Vagts A."/>
            <person name="Vandlen R.L."/>
            <person name="Watanabe C."/>
            <person name="Wieand D."/>
            <person name="Woods K."/>
            <person name="Xie M.-H."/>
            <person name="Yansura D.G."/>
            <person name="Yi S."/>
            <person name="Yu G."/>
            <person name="Yuan J."/>
            <person name="Zhang M."/>
            <person name="Zhang Z."/>
            <person name="Goddard A.D."/>
            <person name="Wood W.I."/>
            <person name="Godowski P.J."/>
            <person name="Gray A.M."/>
        </authorList>
    </citation>
    <scope>NUCLEOTIDE SEQUENCE [LARGE SCALE MRNA]</scope>
</reference>
<reference key="4">
    <citation type="submission" date="2001-12" db="EMBL/GenBank/DDBJ databases">
        <authorList>
            <consortium name="SeattleSNPs variation discovery resource"/>
        </authorList>
    </citation>
    <scope>NUCLEOTIDE SEQUENCE [GENOMIC DNA]</scope>
    <scope>VARIANT VAL-58</scope>
</reference>
<reference key="5">
    <citation type="journal article" date="2004" name="Genome Res.">
        <title>The status, quality, and expansion of the NIH full-length cDNA project: the Mammalian Gene Collection (MGC).</title>
        <authorList>
            <consortium name="The MGC Project Team"/>
        </authorList>
    </citation>
    <scope>NUCLEOTIDE SEQUENCE [LARGE SCALE MRNA]</scope>
    <source>
        <tissue>Pancreas</tissue>
    </source>
</reference>
<reference key="6">
    <citation type="journal article" date="2012" name="Mol. Cell. Proteomics">
        <title>Comparative large-scale characterisation of plant vs. mammal proteins reveals similar and idiosyncratic N-alpha acetylation features.</title>
        <authorList>
            <person name="Bienvenut W.V."/>
            <person name="Sumpton D."/>
            <person name="Martinez A."/>
            <person name="Lilla S."/>
            <person name="Espagne C."/>
            <person name="Meinnel T."/>
            <person name="Giglione C."/>
        </authorList>
    </citation>
    <scope>ACETYLATION [LARGE SCALE ANALYSIS] AT SER-2</scope>
    <scope>CLEAVAGE OF INITIATOR METHIONINE [LARGE SCALE ANALYSIS]</scope>
    <scope>IDENTIFICATION BY MASS SPECTROMETRY [LARGE SCALE ANALYSIS]</scope>
</reference>
<reference key="7">
    <citation type="journal article" date="2012" name="Proc. Natl. Acad. Sci. U.S.A.">
        <title>N-terminal acetylome analyses and functional insights of the N-terminal acetyltransferase NatB.</title>
        <authorList>
            <person name="Van Damme P."/>
            <person name="Lasa M."/>
            <person name="Polevoda B."/>
            <person name="Gazquez C."/>
            <person name="Elosegui-Artola A."/>
            <person name="Kim D.S."/>
            <person name="De Juan-Pardo E."/>
            <person name="Demeyer K."/>
            <person name="Hole K."/>
            <person name="Larrea E."/>
            <person name="Timmerman E."/>
            <person name="Prieto J."/>
            <person name="Arnesen T."/>
            <person name="Sherman F."/>
            <person name="Gevaert K."/>
            <person name="Aldabe R."/>
        </authorList>
    </citation>
    <scope>ACETYLATION [LARGE SCALE ANALYSIS] AT SER-2</scope>
    <scope>CLEAVAGE OF INITIATOR METHIONINE [LARGE SCALE ANALYSIS]</scope>
    <scope>IDENTIFICATION BY MASS SPECTROMETRY [LARGE SCALE ANALYSIS]</scope>
</reference>
<reference key="8">
    <citation type="journal article" date="2013" name="J. Proteome Res.">
        <title>Toward a comprehensive characterization of a human cancer cell phosphoproteome.</title>
        <authorList>
            <person name="Zhou H."/>
            <person name="Di Palma S."/>
            <person name="Preisinger C."/>
            <person name="Peng M."/>
            <person name="Polat A.N."/>
            <person name="Heck A.J."/>
            <person name="Mohammed S."/>
        </authorList>
    </citation>
    <scope>PHOSPHORYLATION [LARGE SCALE ANALYSIS] AT SER-2</scope>
    <scope>IDENTIFICATION BY MASS SPECTROMETRY [LARGE SCALE ANALYSIS]</scope>
    <source>
        <tissue>Erythroleukemia</tissue>
    </source>
</reference>
<reference key="9">
    <citation type="journal article" date="2015" name="Hum. Mol. Genet.">
        <title>Biochemical and cellular analysis of Ogden syndrome reveals downstream Nt-acetylation defects.</title>
        <authorList>
            <person name="Myklebust L.M."/>
            <person name="Van Damme P."/>
            <person name="Stoeve S.I."/>
            <person name="Doerfel M.J."/>
            <person name="Abboud A."/>
            <person name="Kalvik T.V."/>
            <person name="Grauffel C."/>
            <person name="Jonckheere V."/>
            <person name="Wu Y."/>
            <person name="Swensen J."/>
            <person name="Kaasa H."/>
            <person name="Liszczak G."/>
            <person name="Marmorstein R."/>
            <person name="Reuter N."/>
            <person name="Lyon G.J."/>
            <person name="Gevaert K."/>
            <person name="Arnesen T."/>
        </authorList>
    </citation>
    <scope>ACETYLATION AT SER-2</scope>
    <scope>CLEAVAGE OF INITIATOR METHIONINE</scope>
</reference>
<organism>
    <name type="scientific">Homo sapiens</name>
    <name type="common">Human</name>
    <dbReference type="NCBI Taxonomy" id="9606"/>
    <lineage>
        <taxon>Eukaryota</taxon>
        <taxon>Metazoa</taxon>
        <taxon>Chordata</taxon>
        <taxon>Craniata</taxon>
        <taxon>Vertebrata</taxon>
        <taxon>Euteleostomi</taxon>
        <taxon>Mammalia</taxon>
        <taxon>Eutheria</taxon>
        <taxon>Euarchontoglires</taxon>
        <taxon>Primates</taxon>
        <taxon>Haplorrhini</taxon>
        <taxon>Catarrhini</taxon>
        <taxon>Hominidae</taxon>
        <taxon>Homo</taxon>
    </lineage>
</organism>
<protein>
    <recommendedName>
        <fullName>Transmembrane protein 50A</fullName>
    </recommendedName>
    <alternativeName>
        <fullName>Small membrane protein 1</fullName>
    </alternativeName>
</protein>
<name>TM50A_HUMAN</name>
<comment type="interaction">
    <interactant intactId="EBI-12903814">
        <id>O95807</id>
    </interactant>
    <interactant intactId="EBI-8584118">
        <id>Q9H172</id>
        <label>ABCG4</label>
    </interactant>
    <organismsDiffer>false</organismsDiffer>
    <experiments>3</experiments>
</comment>
<comment type="interaction">
    <interactant intactId="EBI-12903814">
        <id>O95807</id>
    </interactant>
    <interactant intactId="EBI-13059134">
        <id>Q13520</id>
        <label>AQP6</label>
    </interactant>
    <organismsDiffer>false</organismsDiffer>
    <experiments>3</experiments>
</comment>
<comment type="interaction">
    <interactant intactId="EBI-12903814">
        <id>O95807</id>
    </interactant>
    <interactant intactId="EBI-372265">
        <id>P21964</id>
        <label>COMT</label>
    </interactant>
    <organismsDiffer>false</organismsDiffer>
    <experiments>3</experiments>
</comment>
<comment type="interaction">
    <interactant intactId="EBI-12903814">
        <id>O95807</id>
    </interactant>
    <interactant intactId="EBI-17686856">
        <id>Q95HB9</id>
        <label>HLA-DPA1</label>
    </interactant>
    <organismsDiffer>false</organismsDiffer>
    <experiments>3</experiments>
</comment>
<comment type="interaction">
    <interactant intactId="EBI-12903814">
        <id>O95807</id>
    </interactant>
    <interactant intactId="EBI-15672507">
        <id>O15243</id>
        <label>LEPROT</label>
    </interactant>
    <organismsDiffer>false</organismsDiffer>
    <experiments>3</experiments>
</comment>
<comment type="interaction">
    <interactant intactId="EBI-12903814">
        <id>O95807</id>
    </interactant>
    <interactant intactId="EBI-750776">
        <id>O95214</id>
        <label>LEPROTL1</label>
    </interactant>
    <organismsDiffer>false</organismsDiffer>
    <experiments>3</experiments>
</comment>
<comment type="interaction">
    <interactant intactId="EBI-12903814">
        <id>O95807</id>
    </interactant>
    <interactant intactId="EBI-7545592">
        <id>Q9H6H4</id>
        <label>REEP4</label>
    </interactant>
    <organismsDiffer>false</organismsDiffer>
    <experiments>3</experiments>
</comment>
<comment type="interaction">
    <interactant intactId="EBI-12903814">
        <id>O95807</id>
    </interactant>
    <interactant intactId="EBI-10262251">
        <id>Q8IWU4</id>
        <label>SLC30A8</label>
    </interactant>
    <organismsDiffer>false</organismsDiffer>
    <experiments>3</experiments>
</comment>
<comment type="interaction">
    <interactant intactId="EBI-12903814">
        <id>O95807</id>
    </interactant>
    <interactant intactId="EBI-19129467">
        <id>Q86SS6</id>
        <label>SYT9</label>
    </interactant>
    <organismsDiffer>false</organismsDiffer>
    <experiments>3</experiments>
</comment>
<comment type="interaction">
    <interactant intactId="EBI-12903814">
        <id>O95807</id>
    </interactant>
    <interactant intactId="EBI-8638294">
        <id>Q9NUH8</id>
        <label>TMEM14B</label>
    </interactant>
    <organismsDiffer>false</organismsDiffer>
    <experiments>3</experiments>
</comment>
<comment type="subcellular location">
    <subcellularLocation>
        <location evidence="4">Membrane</location>
        <topology evidence="4">Multi-pass membrane protein</topology>
    </subcellularLocation>
</comment>
<comment type="similarity">
    <text evidence="4">Belongs to the UPF0220 family.</text>
</comment>
<gene>
    <name type="primary">TMEM50A</name>
    <name type="synonym">SMP1</name>
    <name type="ORF">UNQ386/PRO718</name>
</gene>